<feature type="chain" id="PRO_1000185174" description="L-rhamnose-proton symporter">
    <location>
        <begin position="1"/>
        <end position="344"/>
    </location>
</feature>
<feature type="transmembrane region" description="Helical" evidence="1">
    <location>
        <begin position="4"/>
        <end position="24"/>
    </location>
</feature>
<feature type="transmembrane region" description="Helical" evidence="1">
    <location>
        <begin position="38"/>
        <end position="58"/>
    </location>
</feature>
<feature type="transmembrane region" description="Helical" evidence="1">
    <location>
        <begin position="68"/>
        <end position="88"/>
    </location>
</feature>
<feature type="transmembrane region" description="Helical" evidence="1">
    <location>
        <begin position="101"/>
        <end position="121"/>
    </location>
</feature>
<feature type="transmembrane region" description="Helical" evidence="1">
    <location>
        <begin position="137"/>
        <end position="157"/>
    </location>
</feature>
<feature type="transmembrane region" description="Helical" evidence="1">
    <location>
        <begin position="175"/>
        <end position="195"/>
    </location>
</feature>
<feature type="transmembrane region" description="Helical" evidence="1">
    <location>
        <begin position="214"/>
        <end position="234"/>
    </location>
</feature>
<feature type="transmembrane region" description="Helical" evidence="1">
    <location>
        <begin position="259"/>
        <end position="279"/>
    </location>
</feature>
<feature type="transmembrane region" description="Helical" evidence="1">
    <location>
        <begin position="290"/>
        <end position="310"/>
    </location>
</feature>
<feature type="transmembrane region" description="Helical" evidence="1">
    <location>
        <begin position="323"/>
        <end position="343"/>
    </location>
</feature>
<organism>
    <name type="scientific">Escherichia coli (strain 55989 / EAEC)</name>
    <dbReference type="NCBI Taxonomy" id="585055"/>
    <lineage>
        <taxon>Bacteria</taxon>
        <taxon>Pseudomonadati</taxon>
        <taxon>Pseudomonadota</taxon>
        <taxon>Gammaproteobacteria</taxon>
        <taxon>Enterobacterales</taxon>
        <taxon>Enterobacteriaceae</taxon>
        <taxon>Escherichia</taxon>
    </lineage>
</organism>
<name>RHAT_ECO55</name>
<dbReference type="EMBL" id="CU928145">
    <property type="protein sequence ID" value="CAV01095.1"/>
    <property type="molecule type" value="Genomic_DNA"/>
</dbReference>
<dbReference type="RefSeq" id="WP_000063504.1">
    <property type="nucleotide sequence ID" value="NC_011748.1"/>
</dbReference>
<dbReference type="KEGG" id="eck:EC55989_4386"/>
<dbReference type="HOGENOM" id="CLU_066437_0_0_6"/>
<dbReference type="Proteomes" id="UP000000746">
    <property type="component" value="Chromosome"/>
</dbReference>
<dbReference type="GO" id="GO:0005886">
    <property type="term" value="C:plasma membrane"/>
    <property type="evidence" value="ECO:0007669"/>
    <property type="project" value="UniProtKB-SubCell"/>
</dbReference>
<dbReference type="GO" id="GO:0015153">
    <property type="term" value="F:rhamnose transmembrane transporter activity"/>
    <property type="evidence" value="ECO:0007669"/>
    <property type="project" value="UniProtKB-UniRule"/>
</dbReference>
<dbReference type="GO" id="GO:0015293">
    <property type="term" value="F:symporter activity"/>
    <property type="evidence" value="ECO:0007669"/>
    <property type="project" value="UniProtKB-KW"/>
</dbReference>
<dbReference type="HAMAP" id="MF_01532">
    <property type="entry name" value="RhaT"/>
    <property type="match status" value="1"/>
</dbReference>
<dbReference type="InterPro" id="IPR004673">
    <property type="entry name" value="L-rhamnose-proton_sym_RhaT"/>
</dbReference>
<dbReference type="NCBIfam" id="NF010021">
    <property type="entry name" value="PRK13499.1-1"/>
    <property type="match status" value="1"/>
</dbReference>
<dbReference type="NCBIfam" id="NF010023">
    <property type="entry name" value="PRK13499.1-3"/>
    <property type="match status" value="1"/>
</dbReference>
<dbReference type="NCBIfam" id="TIGR00776">
    <property type="entry name" value="RhaT"/>
    <property type="match status" value="1"/>
</dbReference>
<dbReference type="Pfam" id="PF06379">
    <property type="entry name" value="RhaT"/>
    <property type="match status" value="1"/>
</dbReference>
<sequence>MSNAITMGIFWHLIGAASAACFYAPFKKVKKWSWETMWSVGGIVSWIILPWAISALLLPNFWAYYSSFSLSTLLPVFLFGAMWGIGNINYGLTMRYLGMSMGIGIAIGITLIVGTLMTPIINGNFDVLINTEGGRMTLLGVLVALIGVGIVTRAGQLKERKMGIKAEEFNLKKGLVLAVMCGIFSAGMSFAMNAAKPMHEAAAALGVDPLYVALPSYVIIMGGGAIINLGFCFIRLAKVKDLSLKADFSLAKPLITHNVLLSALGGLMWYLQFFFYAWGHARIPAQYDYISWMLHMSFYVLCGGIVGLVLKEWNNAGRRPVTVLSLGCVVIIVAANIVGIGMAN</sequence>
<evidence type="ECO:0000255" key="1">
    <source>
        <dbReference type="HAMAP-Rule" id="MF_01532"/>
    </source>
</evidence>
<keyword id="KW-0997">Cell inner membrane</keyword>
<keyword id="KW-1003">Cell membrane</keyword>
<keyword id="KW-0472">Membrane</keyword>
<keyword id="KW-1185">Reference proteome</keyword>
<keyword id="KW-0762">Sugar transport</keyword>
<keyword id="KW-0769">Symport</keyword>
<keyword id="KW-0812">Transmembrane</keyword>
<keyword id="KW-1133">Transmembrane helix</keyword>
<keyword id="KW-0813">Transport</keyword>
<reference key="1">
    <citation type="journal article" date="2009" name="PLoS Genet.">
        <title>Organised genome dynamics in the Escherichia coli species results in highly diverse adaptive paths.</title>
        <authorList>
            <person name="Touchon M."/>
            <person name="Hoede C."/>
            <person name="Tenaillon O."/>
            <person name="Barbe V."/>
            <person name="Baeriswyl S."/>
            <person name="Bidet P."/>
            <person name="Bingen E."/>
            <person name="Bonacorsi S."/>
            <person name="Bouchier C."/>
            <person name="Bouvet O."/>
            <person name="Calteau A."/>
            <person name="Chiapello H."/>
            <person name="Clermont O."/>
            <person name="Cruveiller S."/>
            <person name="Danchin A."/>
            <person name="Diard M."/>
            <person name="Dossat C."/>
            <person name="Karoui M.E."/>
            <person name="Frapy E."/>
            <person name="Garry L."/>
            <person name="Ghigo J.M."/>
            <person name="Gilles A.M."/>
            <person name="Johnson J."/>
            <person name="Le Bouguenec C."/>
            <person name="Lescat M."/>
            <person name="Mangenot S."/>
            <person name="Martinez-Jehanne V."/>
            <person name="Matic I."/>
            <person name="Nassif X."/>
            <person name="Oztas S."/>
            <person name="Petit M.A."/>
            <person name="Pichon C."/>
            <person name="Rouy Z."/>
            <person name="Ruf C.S."/>
            <person name="Schneider D."/>
            <person name="Tourret J."/>
            <person name="Vacherie B."/>
            <person name="Vallenet D."/>
            <person name="Medigue C."/>
            <person name="Rocha E.P.C."/>
            <person name="Denamur E."/>
        </authorList>
    </citation>
    <scope>NUCLEOTIDE SEQUENCE [LARGE SCALE GENOMIC DNA]</scope>
    <source>
        <strain>55989 / EAEC</strain>
    </source>
</reference>
<gene>
    <name evidence="1" type="primary">rhaT</name>
    <name type="ordered locus">EC55989_4386</name>
</gene>
<protein>
    <recommendedName>
        <fullName evidence="1">L-rhamnose-proton symporter</fullName>
    </recommendedName>
    <alternativeName>
        <fullName evidence="1">L-rhamnose-H(+) transport protein</fullName>
    </alternativeName>
</protein>
<accession>B7L9F9</accession>
<proteinExistence type="inferred from homology"/>
<comment type="function">
    <text evidence="1">Uptake of L-rhamnose across the cytoplasmic membrane with the concomitant transport of protons into the cell (symport system).</text>
</comment>
<comment type="catalytic activity">
    <reaction evidence="1">
        <text>L-rhamnopyranose(in) + H(+)(in) = L-rhamnopyranose(out) + H(+)(out)</text>
        <dbReference type="Rhea" id="RHEA:29947"/>
        <dbReference type="ChEBI" id="CHEBI:15378"/>
        <dbReference type="ChEBI" id="CHEBI:62346"/>
    </reaction>
    <physiologicalReaction direction="right-to-left" evidence="1">
        <dbReference type="Rhea" id="RHEA:29949"/>
    </physiologicalReaction>
</comment>
<comment type="subcellular location">
    <subcellularLocation>
        <location evidence="1">Cell inner membrane</location>
        <topology evidence="1">Multi-pass membrane protein</topology>
    </subcellularLocation>
</comment>
<comment type="similarity">
    <text evidence="1">Belongs to the L-rhamnose transporter (TC 2.A.7.6) family.</text>
</comment>